<keyword id="KW-0903">Direct protein sequencing</keyword>
<keyword id="KW-1015">Disulfide bond</keyword>
<keyword id="KW-0255">Endonuclease</keyword>
<keyword id="KW-0325">Glycoprotein</keyword>
<keyword id="KW-0378">Hydrolase</keyword>
<keyword id="KW-0479">Metal-binding</keyword>
<keyword id="KW-0540">Nuclease</keyword>
<keyword id="KW-0964">Secreted</keyword>
<keyword id="KW-0862">Zinc</keyword>
<accession>P24504</accession>
<proteinExistence type="evidence at protein level"/>
<reference key="1">
    <citation type="journal article" date="1991" name="Agric. Biol. Chem.">
        <title>Primary structure of a nuclease (nuclease PA3) from a Penicillium sp.</title>
        <authorList>
            <person name="Tabata N."/>
            <person name="Kazama H."/>
            <person name="Ohgi K."/>
            <person name="Irie M."/>
        </authorList>
    </citation>
    <scope>PROTEIN SEQUENCE</scope>
</reference>
<reference key="2">
    <citation type="journal article" date="1990" name="Chem. Pharm. Bull.">
        <title>Purification and characterization of a nuclease (3'-nucleotidase) from a Penicillium sp.</title>
        <authorList>
            <person name="Kazama H."/>
            <person name="Tabata N."/>
            <person name="Ohgi K."/>
            <person name="Irie M."/>
        </authorList>
    </citation>
    <scope>PROTEIN SEQUENCE OF 1-30 AND 268-270</scope>
    <scope>FUNCTION</scope>
    <scope>CATALYTIC ACTIVITY</scope>
    <scope>COFACTOR</scope>
</reference>
<organism>
    <name type="scientific">Penicillium sp</name>
    <dbReference type="NCBI Taxonomy" id="5081"/>
    <lineage>
        <taxon>Eukaryota</taxon>
        <taxon>Fungi</taxon>
        <taxon>Dikarya</taxon>
        <taxon>Ascomycota</taxon>
        <taxon>Pezizomycotina</taxon>
        <taxon>Eurotiomycetes</taxon>
        <taxon>Eurotiomycetidae</taxon>
        <taxon>Eurotiales</taxon>
        <taxon>Aspergillaceae</taxon>
        <taxon>Penicillium</taxon>
    </lineage>
</organism>
<dbReference type="EC" id="3.1.3.6" evidence="5"/>
<dbReference type="PIR" id="JE0408">
    <property type="entry name" value="JE0408"/>
</dbReference>
<dbReference type="SMR" id="P24504"/>
<dbReference type="GO" id="GO:0005576">
    <property type="term" value="C:extracellular region"/>
    <property type="evidence" value="ECO:0007669"/>
    <property type="project" value="UniProtKB-SubCell"/>
</dbReference>
<dbReference type="GO" id="GO:0008254">
    <property type="term" value="F:3'-nucleotidase activity"/>
    <property type="evidence" value="ECO:0007669"/>
    <property type="project" value="UniProtKB-EC"/>
</dbReference>
<dbReference type="GO" id="GO:0004519">
    <property type="term" value="F:endonuclease activity"/>
    <property type="evidence" value="ECO:0007669"/>
    <property type="project" value="UniProtKB-KW"/>
</dbReference>
<dbReference type="GO" id="GO:0046872">
    <property type="term" value="F:metal ion binding"/>
    <property type="evidence" value="ECO:0007669"/>
    <property type="project" value="UniProtKB-KW"/>
</dbReference>
<dbReference type="GO" id="GO:0003676">
    <property type="term" value="F:nucleic acid binding"/>
    <property type="evidence" value="ECO:0007669"/>
    <property type="project" value="InterPro"/>
</dbReference>
<dbReference type="GO" id="GO:0006308">
    <property type="term" value="P:DNA catabolic process"/>
    <property type="evidence" value="ECO:0007669"/>
    <property type="project" value="InterPro"/>
</dbReference>
<dbReference type="CDD" id="cd11010">
    <property type="entry name" value="S1-P1_nuclease"/>
    <property type="match status" value="1"/>
</dbReference>
<dbReference type="Gene3D" id="1.10.575.10">
    <property type="entry name" value="P1 Nuclease"/>
    <property type="match status" value="1"/>
</dbReference>
<dbReference type="InterPro" id="IPR008947">
    <property type="entry name" value="PLipase_C/P1_nuclease_dom_sf"/>
</dbReference>
<dbReference type="InterPro" id="IPR003154">
    <property type="entry name" value="S1/P1nuclease"/>
</dbReference>
<dbReference type="PANTHER" id="PTHR33146">
    <property type="entry name" value="ENDONUCLEASE 4"/>
    <property type="match status" value="1"/>
</dbReference>
<dbReference type="PANTHER" id="PTHR33146:SF26">
    <property type="entry name" value="ENDONUCLEASE 4"/>
    <property type="match status" value="1"/>
</dbReference>
<dbReference type="Pfam" id="PF02265">
    <property type="entry name" value="S1-P1_nuclease"/>
    <property type="match status" value="1"/>
</dbReference>
<dbReference type="SUPFAM" id="SSF48537">
    <property type="entry name" value="Phospholipase C/P1 nuclease"/>
    <property type="match status" value="1"/>
</dbReference>
<comment type="function">
    <text evidence="5">Hydrolyzes only single-stranded DNA and RNA without apparent specificity for bases.</text>
</comment>
<comment type="catalytic activity">
    <reaction evidence="5">
        <text>a ribonucleoside 3'-phosphate + H2O = a ribonucleoside + phosphate</text>
        <dbReference type="Rhea" id="RHEA:10144"/>
        <dbReference type="ChEBI" id="CHEBI:13197"/>
        <dbReference type="ChEBI" id="CHEBI:15377"/>
        <dbReference type="ChEBI" id="CHEBI:18254"/>
        <dbReference type="ChEBI" id="CHEBI:43474"/>
        <dbReference type="EC" id="3.1.3.6"/>
    </reaction>
</comment>
<comment type="cofactor">
    <cofactor evidence="5">
        <name>Zn(2+)</name>
        <dbReference type="ChEBI" id="CHEBI:29105"/>
    </cofactor>
    <text evidence="5">Binds 3 divalent metal cations.</text>
</comment>
<comment type="subcellular location">
    <subcellularLocation>
        <location>Secreted</location>
    </subcellularLocation>
</comment>
<comment type="similarity">
    <text evidence="7">Belongs to the nuclease type I family.</text>
</comment>
<protein>
    <recommendedName>
        <fullName evidence="6">Nuclease PA3</fullName>
        <ecNumber evidence="5">3.1.3.6</ecNumber>
    </recommendedName>
    <alternativeName>
        <fullName evidence="6">Deoxyribonuclease PA3</fullName>
    </alternativeName>
    <alternativeName>
        <fullName evidence="6">Endonuclease PA3</fullName>
    </alternativeName>
</protein>
<evidence type="ECO:0000250" key="1">
    <source>
        <dbReference type="UniProtKB" id="P24021"/>
    </source>
</evidence>
<evidence type="ECO:0000250" key="2">
    <source>
        <dbReference type="UniProtKB" id="P24289"/>
    </source>
</evidence>
<evidence type="ECO:0000250" key="3">
    <source>
        <dbReference type="UniProtKB" id="Q9C9G4"/>
    </source>
</evidence>
<evidence type="ECO:0000255" key="4">
    <source>
        <dbReference type="PROSITE-ProRule" id="PRU00498"/>
    </source>
</evidence>
<evidence type="ECO:0000269" key="5">
    <source>
    </source>
</evidence>
<evidence type="ECO:0000303" key="6">
    <source>
    </source>
</evidence>
<evidence type="ECO:0000305" key="7"/>
<sequence>WGALGHATVAYVAQHYVSPEAASWAQGILGSSSSSYLASIASWADEYRLTSAGKWSASLHFIDAEDNPPTNCNVDYERDCGSSGCSISAIANYTQRVSDSSLSSENHAEALRFLVHFIGDMTQPLHDEAYAVGGNKINVTFDGYHDNLHSDWDTYMPQKLIGGHALSDAESWAKTLVQNIESGNYTAQATGWIKGDNISEPITTATRWASDANALVCTVVMPHGAAALQTGDLYPTYYDSVIDTIELQIAKGGYRLANWINEIHGSEIAK</sequence>
<feature type="chain" id="PRO_0000058004" description="Nuclease PA3">
    <location>
        <begin position="1"/>
        <end position="270"/>
    </location>
</feature>
<feature type="region of interest" description="Substrate binding" evidence="3">
    <location>
        <begin position="116"/>
        <end position="164"/>
    </location>
</feature>
<feature type="binding site" evidence="3">
    <location>
        <begin position="1"/>
        <end position="6"/>
    </location>
    <ligand>
        <name>substrate</name>
    </ligand>
</feature>
<feature type="binding site" evidence="3">
    <location>
        <position position="1"/>
    </location>
    <ligand>
        <name>a divalent metal cation</name>
        <dbReference type="ChEBI" id="CHEBI:60240"/>
        <label>3</label>
    </ligand>
</feature>
<feature type="binding site" evidence="3">
    <location>
        <position position="6"/>
    </location>
    <ligand>
        <name>a divalent metal cation</name>
        <dbReference type="ChEBI" id="CHEBI:60240"/>
        <label>3</label>
    </ligand>
</feature>
<feature type="binding site" evidence="2">
    <location>
        <position position="15"/>
    </location>
    <ligand>
        <name>a divalent metal cation</name>
        <dbReference type="ChEBI" id="CHEBI:60240"/>
        <label>2</label>
    </ligand>
</feature>
<feature type="binding site" evidence="3">
    <location>
        <begin position="45"/>
        <end position="51"/>
    </location>
    <ligand>
        <name>substrate</name>
    </ligand>
</feature>
<feature type="binding site" evidence="3">
    <location>
        <position position="45"/>
    </location>
    <ligand>
        <name>a divalent metal cation</name>
        <dbReference type="ChEBI" id="CHEBI:60240"/>
        <label>1</label>
    </ligand>
</feature>
<feature type="binding site" evidence="2">
    <location>
        <begin position="60"/>
        <end position="63"/>
    </location>
    <ligand>
        <name>substrate</name>
    </ligand>
</feature>
<feature type="binding site" evidence="3">
    <location>
        <position position="60"/>
    </location>
    <ligand>
        <name>a divalent metal cation</name>
        <dbReference type="ChEBI" id="CHEBI:60240"/>
        <label>1</label>
    </ligand>
</feature>
<feature type="binding site" evidence="2">
    <location>
        <begin position="73"/>
        <end position="78"/>
    </location>
    <ligand>
        <name>substrate</name>
    </ligand>
</feature>
<feature type="binding site" evidence="3">
    <location>
        <position position="92"/>
    </location>
    <ligand>
        <name>substrate</name>
    </ligand>
</feature>
<feature type="binding site" evidence="3">
    <location>
        <position position="116"/>
    </location>
    <ligand>
        <name>a divalent metal cation</name>
        <dbReference type="ChEBI" id="CHEBI:60240"/>
        <label>1</label>
    </ligand>
</feature>
<feature type="binding site" evidence="3">
    <location>
        <position position="120"/>
    </location>
    <ligand>
        <name>a divalent metal cation</name>
        <dbReference type="ChEBI" id="CHEBI:60240"/>
        <label>1</label>
    </ligand>
</feature>
<feature type="binding site" evidence="3">
    <location>
        <position position="120"/>
    </location>
    <ligand>
        <name>a divalent metal cation</name>
        <dbReference type="ChEBI" id="CHEBI:60240"/>
        <label>3</label>
    </ligand>
</feature>
<feature type="binding site" evidence="3">
    <location>
        <position position="126"/>
    </location>
    <ligand>
        <name>a divalent metal cation</name>
        <dbReference type="ChEBI" id="CHEBI:60240"/>
        <label>2</label>
    </ligand>
</feature>
<feature type="binding site" evidence="3">
    <location>
        <position position="149"/>
    </location>
    <ligand>
        <name>a divalent metal cation</name>
        <dbReference type="ChEBI" id="CHEBI:60240"/>
        <label>2</label>
    </ligand>
</feature>
<feature type="binding site" evidence="3">
    <location>
        <position position="153"/>
    </location>
    <ligand>
        <name>a divalent metal cation</name>
        <dbReference type="ChEBI" id="CHEBI:60240"/>
        <label>2</label>
    </ligand>
</feature>
<feature type="site" description="Important for catalytic activity" evidence="1">
    <location>
        <position position="45"/>
    </location>
</feature>
<feature type="site" description="Important for catalytic activity" evidence="2">
    <location>
        <position position="48"/>
    </location>
</feature>
<feature type="glycosylation site" description="N-linked (GlcNAc...) asparagine" evidence="4">
    <location>
        <position position="92"/>
    </location>
</feature>
<feature type="glycosylation site" description="N-linked (GlcNAc...) asparagine" evidence="4">
    <location>
        <position position="138"/>
    </location>
</feature>
<feature type="glycosylation site" description="N-linked (GlcNAc...) asparagine" evidence="4">
    <location>
        <position position="184"/>
    </location>
</feature>
<feature type="glycosylation site" description="N-linked (GlcNAc...) asparagine" evidence="4">
    <location>
        <position position="197"/>
    </location>
</feature>
<feature type="disulfide bond" evidence="3">
    <location>
        <begin position="72"/>
        <end position="217"/>
    </location>
</feature>
<feature type="disulfide bond" evidence="3">
    <location>
        <begin position="80"/>
        <end position="85"/>
    </location>
</feature>
<name>NUP3_PENSQ</name>